<evidence type="ECO:0000250" key="1">
    <source>
        <dbReference type="UniProtKB" id="P62277"/>
    </source>
</evidence>
<evidence type="ECO:0000250" key="2">
    <source>
        <dbReference type="UniProtKB" id="P62301"/>
    </source>
</evidence>
<evidence type="ECO:0000269" key="3">
    <source>
    </source>
</evidence>
<evidence type="ECO:0000269" key="4">
    <source>
    </source>
</evidence>
<evidence type="ECO:0000269" key="5">
    <source>
    </source>
</evidence>
<evidence type="ECO:0000269" key="6">
    <source>
    </source>
</evidence>
<evidence type="ECO:0000269" key="7">
    <source>
    </source>
</evidence>
<evidence type="ECO:0000269" key="8">
    <source>
    </source>
</evidence>
<evidence type="ECO:0000269" key="9">
    <source>
    </source>
</evidence>
<evidence type="ECO:0000269" key="10">
    <source>
    </source>
</evidence>
<evidence type="ECO:0000269" key="11">
    <source>
    </source>
</evidence>
<evidence type="ECO:0000269" key="12">
    <source>
    </source>
</evidence>
<evidence type="ECO:0000269" key="13">
    <source>
    </source>
</evidence>
<evidence type="ECO:0000269" key="14">
    <source>
    </source>
</evidence>
<evidence type="ECO:0000269" key="15">
    <source>
    </source>
</evidence>
<evidence type="ECO:0000269" key="16">
    <source>
    </source>
</evidence>
<evidence type="ECO:0000269" key="17">
    <source>
    </source>
</evidence>
<evidence type="ECO:0000269" key="18">
    <source>
    </source>
</evidence>
<evidence type="ECO:0000305" key="19"/>
<evidence type="ECO:0007744" key="20">
    <source>
        <dbReference type="PDB" id="3JAG"/>
    </source>
</evidence>
<evidence type="ECO:0007744" key="21">
    <source>
        <dbReference type="PDB" id="3JAH"/>
    </source>
</evidence>
<evidence type="ECO:0007744" key="22">
    <source>
        <dbReference type="PDB" id="4D5L"/>
    </source>
</evidence>
<evidence type="ECO:0007744" key="23">
    <source>
        <dbReference type="PDB" id="4D61"/>
    </source>
</evidence>
<evidence type="ECO:0007744" key="24">
    <source>
        <dbReference type="PDB" id="4KZX"/>
    </source>
</evidence>
<evidence type="ECO:0007744" key="25">
    <source>
        <dbReference type="PDB" id="4KZY"/>
    </source>
</evidence>
<evidence type="ECO:0007744" key="26">
    <source>
        <dbReference type="PDB" id="5LZS"/>
    </source>
</evidence>
<evidence type="ECO:0007744" key="27">
    <source>
        <dbReference type="PDB" id="5LZT"/>
    </source>
</evidence>
<evidence type="ECO:0007744" key="28">
    <source>
        <dbReference type="PDB" id="6D90"/>
    </source>
</evidence>
<evidence type="ECO:0007744" key="29">
    <source>
        <dbReference type="PDB" id="6D9J"/>
    </source>
</evidence>
<evidence type="ECO:0007744" key="30">
    <source>
        <dbReference type="PDB" id="6GZ3"/>
    </source>
</evidence>
<evidence type="ECO:0007744" key="31">
    <source>
        <dbReference type="PDB" id="6HCF"/>
    </source>
</evidence>
<evidence type="ECO:0007744" key="32">
    <source>
        <dbReference type="PDB" id="6HCJ"/>
    </source>
</evidence>
<evidence type="ECO:0007744" key="33">
    <source>
        <dbReference type="PDB" id="6MTB"/>
    </source>
</evidence>
<evidence type="ECO:0007744" key="34">
    <source>
        <dbReference type="PDB" id="6MTC"/>
    </source>
</evidence>
<evidence type="ECO:0007744" key="35">
    <source>
        <dbReference type="PDB" id="6P5I"/>
    </source>
</evidence>
<evidence type="ECO:0007744" key="36">
    <source>
        <dbReference type="PDB" id="6P5J"/>
    </source>
</evidence>
<evidence type="ECO:0007744" key="37">
    <source>
        <dbReference type="PDB" id="6R5Q"/>
    </source>
</evidence>
<evidence type="ECO:0007744" key="38">
    <source>
        <dbReference type="PDB" id="6R6G"/>
    </source>
</evidence>
<evidence type="ECO:0007744" key="39">
    <source>
        <dbReference type="PDB" id="6SGC"/>
    </source>
</evidence>
<evidence type="ECO:0007744" key="40">
    <source>
        <dbReference type="PDB" id="6W2S"/>
    </source>
</evidence>
<evidence type="ECO:0007744" key="41">
    <source>
        <dbReference type="PDB" id="6W2T"/>
    </source>
</evidence>
<evidence type="ECO:0007744" key="42">
    <source>
        <dbReference type="PDB" id="6ZVK"/>
    </source>
</evidence>
<evidence type="ECO:0007744" key="43">
    <source>
        <dbReference type="PDB" id="7A01"/>
    </source>
</evidence>
<evidence type="ECO:0007744" key="44">
    <source>
        <dbReference type="PDB" id="7OYD"/>
    </source>
</evidence>
<evidence type="ECO:0007744" key="45">
    <source>
        <dbReference type="PDB" id="7SYO"/>
    </source>
</evidence>
<evidence type="ECO:0007744" key="46">
    <source>
        <dbReference type="PDB" id="7SYP"/>
    </source>
</evidence>
<evidence type="ECO:0007744" key="47">
    <source>
        <dbReference type="PDB" id="7UCJ"/>
    </source>
</evidence>
<evidence type="ECO:0007744" key="48">
    <source>
        <dbReference type="PDB" id="7UCK"/>
    </source>
</evidence>
<evidence type="ECO:0007829" key="49">
    <source>
        <dbReference type="PDB" id="6YAL"/>
    </source>
</evidence>
<organism>
    <name type="scientific">Oryctolagus cuniculus</name>
    <name type="common">Rabbit</name>
    <dbReference type="NCBI Taxonomy" id="9986"/>
    <lineage>
        <taxon>Eukaryota</taxon>
        <taxon>Metazoa</taxon>
        <taxon>Chordata</taxon>
        <taxon>Craniata</taxon>
        <taxon>Vertebrata</taxon>
        <taxon>Euteleostomi</taxon>
        <taxon>Mammalia</taxon>
        <taxon>Eutheria</taxon>
        <taxon>Euarchontoglires</taxon>
        <taxon>Glires</taxon>
        <taxon>Lagomorpha</taxon>
        <taxon>Leporidae</taxon>
        <taxon>Oryctolagus</taxon>
    </lineage>
</organism>
<sequence length="151" mass="17222">MGRMHAPGKGLSQSALPYRRSVPTWLKLTSDDVKEQIYKLAKKGLTPSQIGVILRDSHGVAQVRFVTGNKILRILKSKGLAPDLPEDLYHLIKKAVAVRKHLERNRKDKDAKFRLILIESRIHRLARYYKTKRVLPPNWKYESSTASALVA</sequence>
<keyword id="KW-0002">3D-structure</keyword>
<keyword id="KW-0007">Acetylation</keyword>
<keyword id="KW-0963">Cytoplasm</keyword>
<keyword id="KW-1017">Isopeptide bond</keyword>
<keyword id="KW-0539">Nucleus</keyword>
<keyword id="KW-0597">Phosphoprotein</keyword>
<keyword id="KW-1185">Reference proteome</keyword>
<keyword id="KW-0687">Ribonucleoprotein</keyword>
<keyword id="KW-0689">Ribosomal protein</keyword>
<keyword id="KW-0832">Ubl conjugation</keyword>
<name>RS13_RABIT</name>
<comment type="function">
    <text evidence="3 4 5 6 10">Component of the small ribosomal subunit (PubMed:23873042, PubMed:25601755, PubMed:26245381, PubMed:27863242, PubMed:30517857). The ribosome is a large ribonucleoprotein complex responsible for the synthesis of proteins in the cell (PubMed:23873042, PubMed:25601755, PubMed:26245381, PubMed:27863242, PubMed:30517857). Part of the small subunit (SSU) processome, first precursor of the small eukaryotic ribosomal subunit (PubMed:23873042, PubMed:25601755, PubMed:26245381, PubMed:27863242, PubMed:30517857). During the assembly of the SSU processome in the nucleolus, many ribosome biogenesis factors, an RNA chaperone and ribosomal proteins associate with the nascent pre-rRNA and work in concert to generate RNA folding, modifications, rearrangements and cleavage as well as targeted degradation of pre-ribosomal RNA by the RNA exosome (PubMed:23873042, PubMed:25601755, PubMed:26245381, PubMed:27863242, PubMed:30517857).</text>
</comment>
<comment type="subunit">
    <text evidence="3 4 5 6 7 8 9 10 11 12 13 14 15 16 17 18">Component of the small ribosomal subunit (PubMed:23873042, PubMed:25601755, PubMed:26245381, PubMed:27863242, PubMed:29856316, PubMed:30293783, PubMed:30355441, PubMed:30517857, PubMed:31246176, PubMed:31609474, PubMed:31768042, PubMed:32286223, PubMed:33296660, PubMed:35679869, PubMed:35822879, PubMed:36653451). Part of the small subunit (SSU) processome, composed of more than 70 proteins and the RNA chaperone small nucleolar RNA (snoRNA) U3 (PubMed:23873042, PubMed:25601755, PubMed:26245381, PubMed:27863242, PubMed:29856316, PubMed:30293783, PubMed:30355441, PubMed:30517857, PubMed:31246176, PubMed:31609474, PubMed:31768042, PubMed:32286223, PubMed:33296660, PubMed:35679869, PubMed:35822879, PubMed:36653451).</text>
</comment>
<comment type="subcellular location">
    <subcellularLocation>
        <location evidence="3 4 5 6 7 8 9 10 11 12 13 14 15 16 17 18">Cytoplasm</location>
    </subcellularLocation>
    <subcellularLocation>
        <location evidence="1">Nucleus</location>
        <location evidence="1">Nucleolus</location>
    </subcellularLocation>
</comment>
<comment type="PTM">
    <text evidence="1">Ubiquitinated at Lys-27 by RNF14 and RNF25 in response to ribosome collisions (ribosome stalling).</text>
</comment>
<comment type="similarity">
    <text evidence="19">Belongs to the universal ribosomal protein uS15 family.</text>
</comment>
<dbReference type="RefSeq" id="XP_002721403.1">
    <property type="nucleotide sequence ID" value="XM_002721357.5"/>
</dbReference>
<dbReference type="PDB" id="3JAG">
    <property type="method" value="EM"/>
    <property type="resolution" value="3.65 A"/>
    <property type="chains" value="NN=11-151"/>
</dbReference>
<dbReference type="PDB" id="3JAH">
    <property type="method" value="EM"/>
    <property type="resolution" value="3.45 A"/>
    <property type="chains" value="NN=11-151"/>
</dbReference>
<dbReference type="PDB" id="3JAI">
    <property type="method" value="EM"/>
    <property type="resolution" value="3.65 A"/>
    <property type="chains" value="NN=11-151"/>
</dbReference>
<dbReference type="PDB" id="4D5L">
    <property type="method" value="EM"/>
    <property type="resolution" value="9.00 A"/>
    <property type="chains" value="N=1-151"/>
</dbReference>
<dbReference type="PDB" id="4D61">
    <property type="method" value="EM"/>
    <property type="resolution" value="9.00 A"/>
    <property type="chains" value="N=1-151"/>
</dbReference>
<dbReference type="PDB" id="4KZX">
    <property type="method" value="X-ray"/>
    <property type="resolution" value="7.81 A"/>
    <property type="chains" value="N=1-151"/>
</dbReference>
<dbReference type="PDB" id="4KZY">
    <property type="method" value="X-ray"/>
    <property type="resolution" value="7.01 A"/>
    <property type="chains" value="N=1-151"/>
</dbReference>
<dbReference type="PDB" id="4KZZ">
    <property type="method" value="X-ray"/>
    <property type="resolution" value="7.03 A"/>
    <property type="chains" value="N=1-151"/>
</dbReference>
<dbReference type="PDB" id="5K0Y">
    <property type="method" value="EM"/>
    <property type="resolution" value="5.80 A"/>
    <property type="chains" value="Z=11-151"/>
</dbReference>
<dbReference type="PDB" id="5LZS">
    <property type="method" value="EM"/>
    <property type="resolution" value="3.31 A"/>
    <property type="chains" value="NN=1-151"/>
</dbReference>
<dbReference type="PDB" id="5LZT">
    <property type="method" value="EM"/>
    <property type="resolution" value="3.65 A"/>
    <property type="chains" value="NN=1-151"/>
</dbReference>
<dbReference type="PDB" id="5LZU">
    <property type="method" value="EM"/>
    <property type="resolution" value="3.75 A"/>
    <property type="chains" value="NN=1-151"/>
</dbReference>
<dbReference type="PDB" id="5LZV">
    <property type="method" value="EM"/>
    <property type="resolution" value="3.35 A"/>
    <property type="chains" value="NN=1-151"/>
</dbReference>
<dbReference type="PDB" id="5LZW">
    <property type="method" value="EM"/>
    <property type="resolution" value="3.53 A"/>
    <property type="chains" value="NN=1-151"/>
</dbReference>
<dbReference type="PDB" id="5LZX">
    <property type="method" value="EM"/>
    <property type="resolution" value="3.67 A"/>
    <property type="chains" value="NN=1-151"/>
</dbReference>
<dbReference type="PDB" id="5LZY">
    <property type="method" value="EM"/>
    <property type="resolution" value="3.99 A"/>
    <property type="chains" value="NN=1-151"/>
</dbReference>
<dbReference type="PDB" id="5LZZ">
    <property type="method" value="EM"/>
    <property type="resolution" value="3.47 A"/>
    <property type="chains" value="NN=1-151"/>
</dbReference>
<dbReference type="PDB" id="6D90">
    <property type="method" value="EM"/>
    <property type="resolution" value="3.20 A"/>
    <property type="chains" value="OO=1-151"/>
</dbReference>
<dbReference type="PDB" id="6D9J">
    <property type="method" value="EM"/>
    <property type="resolution" value="3.20 A"/>
    <property type="chains" value="OO=1-151"/>
</dbReference>
<dbReference type="PDB" id="6GZ3">
    <property type="method" value="EM"/>
    <property type="resolution" value="3.60 A"/>
    <property type="chains" value="BN=11-151"/>
</dbReference>
<dbReference type="PDB" id="6HCF">
    <property type="method" value="EM"/>
    <property type="resolution" value="3.90 A"/>
    <property type="chains" value="O1=1-151"/>
</dbReference>
<dbReference type="PDB" id="6HCJ">
    <property type="method" value="EM"/>
    <property type="resolution" value="3.80 A"/>
    <property type="chains" value="O2=1-151"/>
</dbReference>
<dbReference type="PDB" id="6HCM">
    <property type="method" value="EM"/>
    <property type="resolution" value="6.80 A"/>
    <property type="chains" value="O1=1-151"/>
</dbReference>
<dbReference type="PDB" id="6HCQ">
    <property type="method" value="EM"/>
    <property type="resolution" value="6.50 A"/>
    <property type="chains" value="O2=1-151"/>
</dbReference>
<dbReference type="PDB" id="6MTB">
    <property type="method" value="EM"/>
    <property type="resolution" value="3.60 A"/>
    <property type="chains" value="NN=11-151"/>
</dbReference>
<dbReference type="PDB" id="6MTC">
    <property type="method" value="EM"/>
    <property type="resolution" value="3.40 A"/>
    <property type="chains" value="NN=11-151"/>
</dbReference>
<dbReference type="PDB" id="6MTD">
    <property type="method" value="EM"/>
    <property type="resolution" value="3.30 A"/>
    <property type="chains" value="NN=11-151"/>
</dbReference>
<dbReference type="PDB" id="6MTE">
    <property type="method" value="EM"/>
    <property type="resolution" value="3.40 A"/>
    <property type="chains" value="NN=11-151"/>
</dbReference>
<dbReference type="PDB" id="6P4G">
    <property type="method" value="EM"/>
    <property type="resolution" value="3.10 A"/>
    <property type="chains" value="O=1-151"/>
</dbReference>
<dbReference type="PDB" id="6P4H">
    <property type="method" value="EM"/>
    <property type="resolution" value="3.20 A"/>
    <property type="chains" value="O=1-151"/>
</dbReference>
<dbReference type="PDB" id="6P5I">
    <property type="method" value="EM"/>
    <property type="resolution" value="3.10 A"/>
    <property type="chains" value="O=1-151"/>
</dbReference>
<dbReference type="PDB" id="6P5J">
    <property type="method" value="EM"/>
    <property type="resolution" value="3.10 A"/>
    <property type="chains" value="O=1-151"/>
</dbReference>
<dbReference type="PDB" id="6P5K">
    <property type="method" value="EM"/>
    <property type="resolution" value="3.10 A"/>
    <property type="chains" value="O=1-151"/>
</dbReference>
<dbReference type="PDB" id="6P5N">
    <property type="method" value="EM"/>
    <property type="resolution" value="3.20 A"/>
    <property type="chains" value="O=1-151"/>
</dbReference>
<dbReference type="PDB" id="6R5Q">
    <property type="method" value="EM"/>
    <property type="resolution" value="3.00 A"/>
    <property type="chains" value="QQ=11-151"/>
</dbReference>
<dbReference type="PDB" id="6R6G">
    <property type="method" value="EM"/>
    <property type="resolution" value="3.70 A"/>
    <property type="chains" value="QQ=11-151"/>
</dbReference>
<dbReference type="PDB" id="6R6P">
    <property type="method" value="EM"/>
    <property type="resolution" value="3.10 A"/>
    <property type="chains" value="QQ=11-151"/>
</dbReference>
<dbReference type="PDB" id="6R7Q">
    <property type="method" value="EM"/>
    <property type="resolution" value="3.90 A"/>
    <property type="chains" value="QQ=11-151"/>
</dbReference>
<dbReference type="PDB" id="6SGC">
    <property type="method" value="EM"/>
    <property type="resolution" value="2.80 A"/>
    <property type="chains" value="O1=1-151"/>
</dbReference>
<dbReference type="PDB" id="6W2S">
    <property type="method" value="EM"/>
    <property type="resolution" value="3.00 A"/>
    <property type="chains" value="O=1-151"/>
</dbReference>
<dbReference type="PDB" id="6W2T">
    <property type="method" value="EM"/>
    <property type="resolution" value="3.36 A"/>
    <property type="chains" value="O=1-151"/>
</dbReference>
<dbReference type="PDB" id="6YAL">
    <property type="method" value="EM"/>
    <property type="resolution" value="3.00 A"/>
    <property type="chains" value="P=11-151"/>
</dbReference>
<dbReference type="PDB" id="6YAM">
    <property type="method" value="EM"/>
    <property type="resolution" value="3.60 A"/>
    <property type="chains" value="P=11-151"/>
</dbReference>
<dbReference type="PDB" id="6YAN">
    <property type="method" value="EM"/>
    <property type="resolution" value="3.48 A"/>
    <property type="chains" value="P=11-151"/>
</dbReference>
<dbReference type="PDB" id="6ZVK">
    <property type="method" value="EM"/>
    <property type="resolution" value="3.49 A"/>
    <property type="chains" value="F3=11-151"/>
</dbReference>
<dbReference type="PDB" id="7A01">
    <property type="method" value="EM"/>
    <property type="resolution" value="3.60 A"/>
    <property type="chains" value="F3=11-151"/>
</dbReference>
<dbReference type="PDB" id="7MDZ">
    <property type="method" value="EM"/>
    <property type="resolution" value="3.20 A"/>
    <property type="chains" value="NN=1-151"/>
</dbReference>
<dbReference type="PDB" id="7NWG">
    <property type="method" value="EM"/>
    <property type="resolution" value="3.80 A"/>
    <property type="chains" value="O2=11-151"/>
</dbReference>
<dbReference type="PDB" id="7NWI">
    <property type="method" value="EM"/>
    <property type="resolution" value="3.13 A"/>
    <property type="chains" value="NN=11-151"/>
</dbReference>
<dbReference type="PDB" id="7O7Y">
    <property type="method" value="EM"/>
    <property type="resolution" value="2.20 A"/>
    <property type="chains" value="Am=1-151"/>
</dbReference>
<dbReference type="PDB" id="7O7Z">
    <property type="method" value="EM"/>
    <property type="resolution" value="2.40 A"/>
    <property type="chains" value="Am=1-151"/>
</dbReference>
<dbReference type="PDB" id="7O80">
    <property type="method" value="EM"/>
    <property type="resolution" value="2.90 A"/>
    <property type="chains" value="Am=1-151"/>
</dbReference>
<dbReference type="PDB" id="7O81">
    <property type="method" value="EM"/>
    <property type="resolution" value="3.10 A"/>
    <property type="chains" value="Am=1-151"/>
</dbReference>
<dbReference type="PDB" id="7OYD">
    <property type="method" value="EM"/>
    <property type="resolution" value="2.30 A"/>
    <property type="chains" value="NN=1-151"/>
</dbReference>
<dbReference type="PDB" id="7SYG">
    <property type="method" value="EM"/>
    <property type="resolution" value="4.30 A"/>
    <property type="chains" value="O=1-151"/>
</dbReference>
<dbReference type="PDB" id="7SYH">
    <property type="method" value="EM"/>
    <property type="resolution" value="4.60 A"/>
    <property type="chains" value="O=1-151"/>
</dbReference>
<dbReference type="PDB" id="7SYI">
    <property type="method" value="EM"/>
    <property type="resolution" value="4.50 A"/>
    <property type="chains" value="O=1-151"/>
</dbReference>
<dbReference type="PDB" id="7SYJ">
    <property type="method" value="EM"/>
    <property type="resolution" value="4.80 A"/>
    <property type="chains" value="O=1-151"/>
</dbReference>
<dbReference type="PDB" id="7SYK">
    <property type="method" value="EM"/>
    <property type="resolution" value="4.20 A"/>
    <property type="chains" value="O=1-151"/>
</dbReference>
<dbReference type="PDB" id="7SYL">
    <property type="method" value="EM"/>
    <property type="resolution" value="4.50 A"/>
    <property type="chains" value="O=1-151"/>
</dbReference>
<dbReference type="PDB" id="7SYM">
    <property type="method" value="EM"/>
    <property type="resolution" value="4.80 A"/>
    <property type="chains" value="O=1-151"/>
</dbReference>
<dbReference type="PDB" id="7SYN">
    <property type="method" value="EM"/>
    <property type="resolution" value="4.00 A"/>
    <property type="chains" value="O=1-151"/>
</dbReference>
<dbReference type="PDB" id="7SYO">
    <property type="method" value="EM"/>
    <property type="resolution" value="4.60 A"/>
    <property type="chains" value="O=1-151"/>
</dbReference>
<dbReference type="PDB" id="7SYP">
    <property type="method" value="EM"/>
    <property type="resolution" value="4.00 A"/>
    <property type="chains" value="O=1-151"/>
</dbReference>
<dbReference type="PDB" id="7SYQ">
    <property type="method" value="EM"/>
    <property type="resolution" value="3.80 A"/>
    <property type="chains" value="O=1-151"/>
</dbReference>
<dbReference type="PDB" id="7SYR">
    <property type="method" value="EM"/>
    <property type="resolution" value="3.60 A"/>
    <property type="chains" value="O=1-151"/>
</dbReference>
<dbReference type="PDB" id="7SYS">
    <property type="method" value="EM"/>
    <property type="resolution" value="3.50 A"/>
    <property type="chains" value="O=1-151"/>
</dbReference>
<dbReference type="PDB" id="7SYT">
    <property type="method" value="EM"/>
    <property type="resolution" value="4.40 A"/>
    <property type="chains" value="O=1-151"/>
</dbReference>
<dbReference type="PDB" id="7SYU">
    <property type="method" value="EM"/>
    <property type="resolution" value="4.60 A"/>
    <property type="chains" value="O=1-151"/>
</dbReference>
<dbReference type="PDB" id="7SYV">
    <property type="method" value="EM"/>
    <property type="resolution" value="3.90 A"/>
    <property type="chains" value="O=1-151"/>
</dbReference>
<dbReference type="PDB" id="7SYW">
    <property type="method" value="EM"/>
    <property type="resolution" value="3.70 A"/>
    <property type="chains" value="O=1-151"/>
</dbReference>
<dbReference type="PDB" id="7SYX">
    <property type="method" value="EM"/>
    <property type="resolution" value="3.70 A"/>
    <property type="chains" value="O=1-151"/>
</dbReference>
<dbReference type="PDB" id="7TOQ">
    <property type="method" value="EM"/>
    <property type="resolution" value="3.10 A"/>
    <property type="chains" value="AS13=11-151"/>
</dbReference>
<dbReference type="PDB" id="7TOR">
    <property type="method" value="EM"/>
    <property type="resolution" value="2.90 A"/>
    <property type="chains" value="AS13=11-151"/>
</dbReference>
<dbReference type="PDB" id="7UCJ">
    <property type="method" value="EM"/>
    <property type="resolution" value="3.10 A"/>
    <property type="chains" value="NN=11-151"/>
</dbReference>
<dbReference type="PDB" id="7UCK">
    <property type="method" value="EM"/>
    <property type="resolution" value="2.80 A"/>
    <property type="chains" value="NN=11-151"/>
</dbReference>
<dbReference type="PDB" id="8BHF">
    <property type="method" value="EM"/>
    <property type="resolution" value="3.10 A"/>
    <property type="chains" value="O3=11-151"/>
</dbReference>
<dbReference type="PDB" id="8BTK">
    <property type="method" value="EM"/>
    <property type="resolution" value="3.50 A"/>
    <property type="chains" value="Am=1-151"/>
</dbReference>
<dbReference type="PDB" id="8P03">
    <property type="method" value="EM"/>
    <property type="resolution" value="3.04 A"/>
    <property type="chains" value="P=2-151"/>
</dbReference>
<dbReference type="PDB" id="8P09">
    <property type="method" value="EM"/>
    <property type="resolution" value="3.30 A"/>
    <property type="chains" value="P=2-151"/>
</dbReference>
<dbReference type="PDB" id="8P2K">
    <property type="method" value="EM"/>
    <property type="resolution" value="2.90 A"/>
    <property type="chains" value="Am=1-151"/>
</dbReference>
<dbReference type="PDB" id="8SCB">
    <property type="method" value="EM"/>
    <property type="resolution" value="2.50 A"/>
    <property type="chains" value="NN=1-151"/>
</dbReference>
<dbReference type="PDB" id="8VFT">
    <property type="method" value="EM"/>
    <property type="resolution" value="3.30 A"/>
    <property type="chains" value="NN=1-151"/>
</dbReference>
<dbReference type="PDB" id="9BDL">
    <property type="method" value="EM"/>
    <property type="resolution" value="2.80 A"/>
    <property type="chains" value="AS13=2-150"/>
</dbReference>
<dbReference type="PDB" id="9BDN">
    <property type="method" value="EM"/>
    <property type="resolution" value="3.10 A"/>
    <property type="chains" value="AS13=2-150"/>
</dbReference>
<dbReference type="PDB" id="9BDP">
    <property type="method" value="EM"/>
    <property type="resolution" value="3.70 A"/>
    <property type="chains" value="AS13=2-150"/>
</dbReference>
<dbReference type="PDB" id="9C8K">
    <property type="method" value="EM"/>
    <property type="resolution" value="3.10 A"/>
    <property type="chains" value="N=1-151"/>
</dbReference>
<dbReference type="PDB" id="9F1B">
    <property type="method" value="EM"/>
    <property type="resolution" value="3.01 A"/>
    <property type="chains" value="Am=1-151"/>
</dbReference>
<dbReference type="PDB" id="9F1C">
    <property type="method" value="EM"/>
    <property type="resolution" value="3.78 A"/>
    <property type="chains" value="Am=1-151"/>
</dbReference>
<dbReference type="PDB" id="9F1D">
    <property type="method" value="EM"/>
    <property type="resolution" value="3.26 A"/>
    <property type="chains" value="Am=1-151"/>
</dbReference>
<dbReference type="PDBsum" id="3JAG"/>
<dbReference type="PDBsum" id="3JAH"/>
<dbReference type="PDBsum" id="3JAI"/>
<dbReference type="PDBsum" id="4D5L"/>
<dbReference type="PDBsum" id="4D61"/>
<dbReference type="PDBsum" id="4KZX"/>
<dbReference type="PDBsum" id="4KZY"/>
<dbReference type="PDBsum" id="4KZZ"/>
<dbReference type="PDBsum" id="5K0Y"/>
<dbReference type="PDBsum" id="5LZS"/>
<dbReference type="PDBsum" id="5LZT"/>
<dbReference type="PDBsum" id="5LZU"/>
<dbReference type="PDBsum" id="5LZV"/>
<dbReference type="PDBsum" id="5LZW"/>
<dbReference type="PDBsum" id="5LZX"/>
<dbReference type="PDBsum" id="5LZY"/>
<dbReference type="PDBsum" id="5LZZ"/>
<dbReference type="PDBsum" id="6D90"/>
<dbReference type="PDBsum" id="6D9J"/>
<dbReference type="PDBsum" id="6GZ3"/>
<dbReference type="PDBsum" id="6HCF"/>
<dbReference type="PDBsum" id="6HCJ"/>
<dbReference type="PDBsum" id="6HCM"/>
<dbReference type="PDBsum" id="6HCQ"/>
<dbReference type="PDBsum" id="6MTB"/>
<dbReference type="PDBsum" id="6MTC"/>
<dbReference type="PDBsum" id="6MTD"/>
<dbReference type="PDBsum" id="6MTE"/>
<dbReference type="PDBsum" id="6P4G"/>
<dbReference type="PDBsum" id="6P4H"/>
<dbReference type="PDBsum" id="6P5I"/>
<dbReference type="PDBsum" id="6P5J"/>
<dbReference type="PDBsum" id="6P5K"/>
<dbReference type="PDBsum" id="6P5N"/>
<dbReference type="PDBsum" id="6R5Q"/>
<dbReference type="PDBsum" id="6R6G"/>
<dbReference type="PDBsum" id="6R6P"/>
<dbReference type="PDBsum" id="6R7Q"/>
<dbReference type="PDBsum" id="6SGC"/>
<dbReference type="PDBsum" id="6W2S"/>
<dbReference type="PDBsum" id="6W2T"/>
<dbReference type="PDBsum" id="6YAL"/>
<dbReference type="PDBsum" id="6YAM"/>
<dbReference type="PDBsum" id="6YAN"/>
<dbReference type="PDBsum" id="6ZVK"/>
<dbReference type="PDBsum" id="7A01"/>
<dbReference type="PDBsum" id="7MDZ"/>
<dbReference type="PDBsum" id="7NWG"/>
<dbReference type="PDBsum" id="7NWI"/>
<dbReference type="PDBsum" id="7O7Y"/>
<dbReference type="PDBsum" id="7O7Z"/>
<dbReference type="PDBsum" id="7O80"/>
<dbReference type="PDBsum" id="7O81"/>
<dbReference type="PDBsum" id="7OYD"/>
<dbReference type="PDBsum" id="7SYG"/>
<dbReference type="PDBsum" id="7SYH"/>
<dbReference type="PDBsum" id="7SYI"/>
<dbReference type="PDBsum" id="7SYJ"/>
<dbReference type="PDBsum" id="7SYK"/>
<dbReference type="PDBsum" id="7SYL"/>
<dbReference type="PDBsum" id="7SYM"/>
<dbReference type="PDBsum" id="7SYN"/>
<dbReference type="PDBsum" id="7SYO"/>
<dbReference type="PDBsum" id="7SYP"/>
<dbReference type="PDBsum" id="7SYQ"/>
<dbReference type="PDBsum" id="7SYR"/>
<dbReference type="PDBsum" id="7SYS"/>
<dbReference type="PDBsum" id="7SYT"/>
<dbReference type="PDBsum" id="7SYU"/>
<dbReference type="PDBsum" id="7SYV"/>
<dbReference type="PDBsum" id="7SYW"/>
<dbReference type="PDBsum" id="7SYX"/>
<dbReference type="PDBsum" id="7TOQ"/>
<dbReference type="PDBsum" id="7TOR"/>
<dbReference type="PDBsum" id="7UCJ"/>
<dbReference type="PDBsum" id="7UCK"/>
<dbReference type="PDBsum" id="8BHF"/>
<dbReference type="PDBsum" id="8BTK"/>
<dbReference type="PDBsum" id="8P03"/>
<dbReference type="PDBsum" id="8P09"/>
<dbReference type="PDBsum" id="8P2K"/>
<dbReference type="PDBsum" id="8SCB"/>
<dbReference type="PDBsum" id="8VFT"/>
<dbReference type="PDBsum" id="9BDL"/>
<dbReference type="PDBsum" id="9BDN"/>
<dbReference type="PDBsum" id="9BDP"/>
<dbReference type="PDBsum" id="9C8K"/>
<dbReference type="PDBsum" id="9F1B"/>
<dbReference type="PDBsum" id="9F1C"/>
<dbReference type="PDBsum" id="9F1D"/>
<dbReference type="EMDB" id="EMD-0098"/>
<dbReference type="EMDB" id="EMD-0099"/>
<dbReference type="EMDB" id="EMD-0100"/>
<dbReference type="EMDB" id="EMD-0192"/>
<dbReference type="EMDB" id="EMD-0194"/>
<dbReference type="EMDB" id="EMD-0195"/>
<dbReference type="EMDB" id="EMD-0197"/>
<dbReference type="EMDB" id="EMD-10181"/>
<dbReference type="EMDB" id="EMD-10760"/>
<dbReference type="EMDB" id="EMD-10761"/>
<dbReference type="EMDB" id="EMD-10762"/>
<dbReference type="EMDB" id="EMD-11459"/>
<dbReference type="EMDB" id="EMD-11590"/>
<dbReference type="EMDB" id="EMD-12631"/>
<dbReference type="EMDB" id="EMD-12633"/>
<dbReference type="EMDB" id="EMD-12756"/>
<dbReference type="EMDB" id="EMD-12757"/>
<dbReference type="EMDB" id="EMD-12758"/>
<dbReference type="EMDB" id="EMD-12759"/>
<dbReference type="EMDB" id="EMD-13114"/>
<dbReference type="EMDB" id="EMD-16052"/>
<dbReference type="EMDB" id="EMD-16232"/>
<dbReference type="EMDB" id="EMD-17329"/>
<dbReference type="EMDB" id="EMD-17330"/>
<dbReference type="EMDB" id="EMD-17367"/>
<dbReference type="EMDB" id="EMD-20248"/>
<dbReference type="EMDB" id="EMD-20249"/>
<dbReference type="EMDB" id="EMD-20255"/>
<dbReference type="EMDB" id="EMD-20256"/>
<dbReference type="EMDB" id="EMD-20257"/>
<dbReference type="EMDB" id="EMD-20258"/>
<dbReference type="EMDB" id="EMD-21529"/>
<dbReference type="EMDB" id="EMD-21530"/>
<dbReference type="EMDB" id="EMD-22432"/>
<dbReference type="EMDB" id="EMD-22433"/>
<dbReference type="EMDB" id="EMD-23785"/>
<dbReference type="EMDB" id="EMD-25527"/>
<dbReference type="EMDB" id="EMD-25528"/>
<dbReference type="EMDB" id="EMD-25529"/>
<dbReference type="EMDB" id="EMD-25530"/>
<dbReference type="EMDB" id="EMD-25531"/>
<dbReference type="EMDB" id="EMD-25532"/>
<dbReference type="EMDB" id="EMD-25533"/>
<dbReference type="EMDB" id="EMD-25534"/>
<dbReference type="EMDB" id="EMD-25535"/>
<dbReference type="EMDB" id="EMD-25536"/>
<dbReference type="EMDB" id="EMD-25537"/>
<dbReference type="EMDB" id="EMD-25538"/>
<dbReference type="EMDB" id="EMD-25539"/>
<dbReference type="EMDB" id="EMD-25540"/>
<dbReference type="EMDB" id="EMD-25541"/>
<dbReference type="EMDB" id="EMD-25542"/>
<dbReference type="EMDB" id="EMD-25543"/>
<dbReference type="EMDB" id="EMD-25544"/>
<dbReference type="EMDB" id="EMD-26035"/>
<dbReference type="EMDB" id="EMD-26036"/>
<dbReference type="EMDB" id="EMD-26444"/>
<dbReference type="EMDB" id="EMD-26445"/>
<dbReference type="EMDB" id="EMD-40344"/>
<dbReference type="EMDB" id="EMD-4130"/>
<dbReference type="EMDB" id="EMD-4131"/>
<dbReference type="EMDB" id="EMD-4132"/>
<dbReference type="EMDB" id="EMD-4133"/>
<dbReference type="EMDB" id="EMD-4134"/>
<dbReference type="EMDB" id="EMD-4135"/>
<dbReference type="EMDB" id="EMD-4136"/>
<dbReference type="EMDB" id="EMD-4137"/>
<dbReference type="EMDB" id="EMD-43189"/>
<dbReference type="EMDB" id="EMD-44461"/>
<dbReference type="EMDB" id="EMD-44463"/>
<dbReference type="EMDB" id="EMD-44464"/>
<dbReference type="EMDB" id="EMD-45307"/>
<dbReference type="EMDB" id="EMD-4729"/>
<dbReference type="EMDB" id="EMD-4735"/>
<dbReference type="EMDB" id="EMD-4737"/>
<dbReference type="EMDB" id="EMD-4745"/>
<dbReference type="EMDB" id="EMD-50124"/>
<dbReference type="EMDB" id="EMD-50125"/>
<dbReference type="EMDB" id="EMD-50126"/>
<dbReference type="EMDB" id="EMD-7834"/>
<dbReference type="EMDB" id="EMD-7836"/>
<dbReference type="EMDB" id="EMD-8190"/>
<dbReference type="EMDB" id="EMD-9237"/>
<dbReference type="EMDB" id="EMD-9239"/>
<dbReference type="EMDB" id="EMD-9240"/>
<dbReference type="EMDB" id="EMD-9242"/>
<dbReference type="SMR" id="G1SP51"/>
<dbReference type="IntAct" id="G1SP51">
    <property type="interactions" value="1"/>
</dbReference>
<dbReference type="PaxDb" id="9986-ENSOCUP00000004803"/>
<dbReference type="GeneID" id="100340445"/>
<dbReference type="KEGG" id="ocu:100340445"/>
<dbReference type="CTD" id="6207"/>
<dbReference type="eggNOG" id="KOG0400">
    <property type="taxonomic scope" value="Eukaryota"/>
</dbReference>
<dbReference type="HOGENOM" id="CLU_090139_1_0_1"/>
<dbReference type="OMA" id="MHTRRKG"/>
<dbReference type="TreeFam" id="TF300190"/>
<dbReference type="EvolutionaryTrace" id="G1SP51"/>
<dbReference type="Proteomes" id="UP000001811">
    <property type="component" value="Unplaced"/>
</dbReference>
<dbReference type="Bgee" id="ENSOCUG00000005536">
    <property type="expression patterns" value="Expressed in upper lobe of left lung and 15 other cell types or tissues"/>
</dbReference>
<dbReference type="GO" id="GO:0022626">
    <property type="term" value="C:cytosolic ribosome"/>
    <property type="evidence" value="ECO:0000314"/>
    <property type="project" value="UniProtKB"/>
</dbReference>
<dbReference type="GO" id="GO:0022627">
    <property type="term" value="C:cytosolic small ribosomal subunit"/>
    <property type="evidence" value="ECO:0007669"/>
    <property type="project" value="TreeGrafter"/>
</dbReference>
<dbReference type="GO" id="GO:0005730">
    <property type="term" value="C:nucleolus"/>
    <property type="evidence" value="ECO:0007669"/>
    <property type="project" value="UniProtKB-SubCell"/>
</dbReference>
<dbReference type="GO" id="GO:0070181">
    <property type="term" value="F:small ribosomal subunit rRNA binding"/>
    <property type="evidence" value="ECO:0007669"/>
    <property type="project" value="TreeGrafter"/>
</dbReference>
<dbReference type="GO" id="GO:0003735">
    <property type="term" value="F:structural constituent of ribosome"/>
    <property type="evidence" value="ECO:0000314"/>
    <property type="project" value="UniProtKB"/>
</dbReference>
<dbReference type="GO" id="GO:0006412">
    <property type="term" value="P:translation"/>
    <property type="evidence" value="ECO:0007669"/>
    <property type="project" value="InterPro"/>
</dbReference>
<dbReference type="CDD" id="cd00353">
    <property type="entry name" value="Ribosomal_S15p_S13e"/>
    <property type="match status" value="1"/>
</dbReference>
<dbReference type="FunFam" id="1.10.287.10:FF:000003">
    <property type="entry name" value="40S ribosomal protein S13"/>
    <property type="match status" value="1"/>
</dbReference>
<dbReference type="FunFam" id="4.10.860.130:FF:000001">
    <property type="entry name" value="40S ribosomal protein S13"/>
    <property type="match status" value="1"/>
</dbReference>
<dbReference type="Gene3D" id="4.10.860.130">
    <property type="match status" value="1"/>
</dbReference>
<dbReference type="Gene3D" id="1.10.287.10">
    <property type="entry name" value="S15/NS1, RNA-binding"/>
    <property type="match status" value="1"/>
</dbReference>
<dbReference type="HAMAP" id="MF_01343_A">
    <property type="entry name" value="Ribosomal_uS15_A"/>
    <property type="match status" value="1"/>
</dbReference>
<dbReference type="InterPro" id="IPR000589">
    <property type="entry name" value="Ribosomal_uS15"/>
</dbReference>
<dbReference type="InterPro" id="IPR023029">
    <property type="entry name" value="Ribosomal_uS15_arc_euk"/>
</dbReference>
<dbReference type="InterPro" id="IPR012606">
    <property type="entry name" value="Ribosomal_uS15_N"/>
</dbReference>
<dbReference type="InterPro" id="IPR009068">
    <property type="entry name" value="uS15_NS1_RNA-bd_sf"/>
</dbReference>
<dbReference type="NCBIfam" id="NF006331">
    <property type="entry name" value="PRK08561.1"/>
    <property type="match status" value="1"/>
</dbReference>
<dbReference type="PANTHER" id="PTHR11885">
    <property type="entry name" value="RIBOSOMAL PROTEIN S15P/S13E"/>
    <property type="match status" value="1"/>
</dbReference>
<dbReference type="PANTHER" id="PTHR11885:SF6">
    <property type="entry name" value="SMALL RIBOSOMAL SUBUNIT PROTEIN US15"/>
    <property type="match status" value="1"/>
</dbReference>
<dbReference type="Pfam" id="PF08069">
    <property type="entry name" value="Ribosomal_S13_N"/>
    <property type="match status" value="1"/>
</dbReference>
<dbReference type="Pfam" id="PF00312">
    <property type="entry name" value="Ribosomal_S15"/>
    <property type="match status" value="1"/>
</dbReference>
<dbReference type="SMART" id="SM01386">
    <property type="entry name" value="Ribosomal_S13_N"/>
    <property type="match status" value="1"/>
</dbReference>
<dbReference type="SMART" id="SM01387">
    <property type="entry name" value="Ribosomal_S15"/>
    <property type="match status" value="1"/>
</dbReference>
<dbReference type="SUPFAM" id="SSF47060">
    <property type="entry name" value="S15/NS1 RNA-binding domain"/>
    <property type="match status" value="1"/>
</dbReference>
<dbReference type="PROSITE" id="PS00362">
    <property type="entry name" value="RIBOSOMAL_S15"/>
    <property type="match status" value="1"/>
</dbReference>
<gene>
    <name type="primary">RPS13</name>
</gene>
<feature type="initiator methionine" description="Removed" evidence="1">
    <location>
        <position position="1"/>
    </location>
</feature>
<feature type="chain" id="PRO_0000460064" description="Small ribosomal subunit protein uS15">
    <location>
        <begin position="2"/>
        <end position="151"/>
    </location>
</feature>
<feature type="modified residue" description="N6-acetyllysine; alternate" evidence="1">
    <location>
        <position position="27"/>
    </location>
</feature>
<feature type="modified residue" description="N6-succinyllysine; alternate" evidence="2">
    <location>
        <position position="27"/>
    </location>
</feature>
<feature type="modified residue" description="Phosphoserine" evidence="1">
    <location>
        <position position="30"/>
    </location>
</feature>
<feature type="modified residue" description="N6-succinyllysine" evidence="2">
    <location>
        <position position="34"/>
    </location>
</feature>
<feature type="modified residue" description="Phosphotyrosine" evidence="1">
    <location>
        <position position="38"/>
    </location>
</feature>
<feature type="cross-link" description="Glycyl lysine isopeptide (Lys-Gly) (interchain with G-Cter in ubiquitin)" evidence="1">
    <location>
        <position position="27"/>
    </location>
</feature>
<feature type="cross-link" description="Glycyl lysine isopeptide (Lys-Gly) (interchain with G-Cter in SUMO2)" evidence="1">
    <location>
        <position position="43"/>
    </location>
</feature>
<feature type="strand" evidence="49">
    <location>
        <begin position="4"/>
        <end position="7"/>
    </location>
</feature>
<feature type="helix" evidence="49">
    <location>
        <begin position="30"/>
        <end position="42"/>
    </location>
</feature>
<feature type="helix" evidence="49">
    <location>
        <begin position="47"/>
        <end position="55"/>
    </location>
</feature>
<feature type="strand" evidence="49">
    <location>
        <begin position="65"/>
        <end position="69"/>
    </location>
</feature>
<feature type="helix" evidence="49">
    <location>
        <begin position="71"/>
        <end position="78"/>
    </location>
</feature>
<feature type="helix" evidence="49">
    <location>
        <begin position="86"/>
        <end position="104"/>
    </location>
</feature>
<feature type="helix" evidence="49">
    <location>
        <begin position="109"/>
        <end position="129"/>
    </location>
</feature>
<feature type="turn" evidence="49">
    <location>
        <begin position="130"/>
        <end position="133"/>
    </location>
</feature>
<feature type="helix" evidence="49">
    <location>
        <begin position="143"/>
        <end position="150"/>
    </location>
</feature>
<protein>
    <recommendedName>
        <fullName>Small ribosomal subunit protein uS15</fullName>
    </recommendedName>
    <alternativeName>
        <fullName>40S ribosomal protein S13</fullName>
    </alternativeName>
</protein>
<proteinExistence type="evidence at protein level"/>
<reference key="1">
    <citation type="journal article" date="2011" name="Nature">
        <title>A high-resolution map of human evolutionary constraint using 29 mammals.</title>
        <authorList>
            <person name="Lindblad-Toh K."/>
            <person name="Garber M."/>
            <person name="Zuk O."/>
            <person name="Lin M.F."/>
            <person name="Parker B.J."/>
            <person name="Washietl S."/>
            <person name="Kheradpour P."/>
            <person name="Ernst J."/>
            <person name="Jordan G."/>
            <person name="Mauceli E."/>
            <person name="Ward L.D."/>
            <person name="Lowe C.B."/>
            <person name="Holloway A.K."/>
            <person name="Clamp M."/>
            <person name="Gnerre S."/>
            <person name="Alfoldi J."/>
            <person name="Beal K."/>
            <person name="Chang J."/>
            <person name="Clawson H."/>
            <person name="Cuff J."/>
            <person name="Di Palma F."/>
            <person name="Fitzgerald S."/>
            <person name="Flicek P."/>
            <person name="Guttman M."/>
            <person name="Hubisz M.J."/>
            <person name="Jaffe D.B."/>
            <person name="Jungreis I."/>
            <person name="Kent W.J."/>
            <person name="Kostka D."/>
            <person name="Lara M."/>
            <person name="Martins A.L."/>
            <person name="Massingham T."/>
            <person name="Moltke I."/>
            <person name="Raney B.J."/>
            <person name="Rasmussen M.D."/>
            <person name="Robinson J."/>
            <person name="Stark A."/>
            <person name="Vilella A.J."/>
            <person name="Wen J."/>
            <person name="Xie X."/>
            <person name="Zody M.C."/>
            <person name="Baldwin J."/>
            <person name="Bloom T."/>
            <person name="Chin C.W."/>
            <person name="Heiman D."/>
            <person name="Nicol R."/>
            <person name="Nusbaum C."/>
            <person name="Young S."/>
            <person name="Wilkinson J."/>
            <person name="Worley K.C."/>
            <person name="Kovar C.L."/>
            <person name="Muzny D.M."/>
            <person name="Gibbs R.A."/>
            <person name="Cree A."/>
            <person name="Dihn H.H."/>
            <person name="Fowler G."/>
            <person name="Jhangiani S."/>
            <person name="Joshi V."/>
            <person name="Lee S."/>
            <person name="Lewis L.R."/>
            <person name="Nazareth L.V."/>
            <person name="Okwuonu G."/>
            <person name="Santibanez J."/>
            <person name="Warren W.C."/>
            <person name="Mardis E.R."/>
            <person name="Weinstock G.M."/>
            <person name="Wilson R.K."/>
            <person name="Delehaunty K."/>
            <person name="Dooling D."/>
            <person name="Fronik C."/>
            <person name="Fulton L."/>
            <person name="Fulton B."/>
            <person name="Graves T."/>
            <person name="Minx P."/>
            <person name="Sodergren E."/>
            <person name="Birney E."/>
            <person name="Margulies E.H."/>
            <person name="Herrero J."/>
            <person name="Green E.D."/>
            <person name="Haussler D."/>
            <person name="Siepel A."/>
            <person name="Goldman N."/>
            <person name="Pollard K.S."/>
            <person name="Pedersen J.S."/>
            <person name="Lander E.S."/>
            <person name="Kellis M."/>
        </authorList>
    </citation>
    <scope>NUCLEOTIDE SEQUENCE [LARGE SCALE GENOMIC DNA]</scope>
    <source>
        <strain>Thorbecke</strain>
    </source>
</reference>
<reference evidence="24 25" key="2">
    <citation type="journal article" date="2013" name="Nature">
        <title>The initiation of mammalian protein synthesis and mRNA scanning mechanism.</title>
        <authorList>
            <person name="Lomakin I.B."/>
            <person name="Steitz T.A."/>
        </authorList>
    </citation>
    <scope>X-RAY CRYSTALLOGRAPHY (7.01 ANGSTROMS) OF 40S RIBOSOME</scope>
    <scope>FUNCTION</scope>
    <scope>SUBUNIT</scope>
    <scope>SUBCELLULAR LOCATION</scope>
</reference>
<reference evidence="22 23" key="3">
    <citation type="journal article" date="2015" name="Mol. Cell">
        <title>Cryo-EM of ribosomal 80S complexes with termination factors reveals the translocated cricket paralysis virus IRES.</title>
        <authorList>
            <person name="Muhs M."/>
            <person name="Hilal T."/>
            <person name="Mielke T."/>
            <person name="Skabkin M.A."/>
            <person name="Sanbonmatsu K.Y."/>
            <person name="Pestova T.V."/>
            <person name="Spahn C.M."/>
        </authorList>
    </citation>
    <scope>STRUCTURE BY ELECTRON MICROSCOPY (9.00 ANGSTROMS) OF RIBOSOME</scope>
    <scope>FUNCTION</scope>
    <scope>SUBUNIT</scope>
    <scope>SUBCELLULAR LOCATION</scope>
</reference>
<reference evidence="20 21" key="4">
    <citation type="journal article" date="2015" name="Nature">
        <title>Structural basis for stop codon recognition in eukaryotes.</title>
        <authorList>
            <person name="Brown A."/>
            <person name="Shao S."/>
            <person name="Murray J."/>
            <person name="Hegde R.S."/>
            <person name="Ramakrishnan V."/>
        </authorList>
    </citation>
    <scope>STRUCTURE BY ELECTRON MICROSCOPY (3.45 ANGSTROMS) OF 2-151 OF RIBOSOME</scope>
    <scope>FUNCTION</scope>
    <scope>SUBCELLULAR LOCATION</scope>
    <scope>SUBUNIT</scope>
</reference>
<reference evidence="26 27" key="5">
    <citation type="journal article" date="2016" name="Cell">
        <title>Decoding mammalian ribosome-mRNA states by translational GTPase complexes.</title>
        <authorList>
            <person name="Shao S."/>
            <person name="Murray J."/>
            <person name="Brown A."/>
            <person name="Taunton J."/>
            <person name="Ramakrishnan V."/>
            <person name="Hegde R.S."/>
        </authorList>
    </citation>
    <scope>STRUCTURE BY ELECTRON MICROSCOPY (3.31 ANGSTROMS) OF 1-226 OF RIBOSOME</scope>
    <scope>FUNCTION</scope>
    <scope>SUBCELLULAR LOCATION</scope>
    <scope>SUBUNIT</scope>
</reference>
<reference evidence="30" key="6">
    <citation type="journal article" date="2018" name="Cell Rep.">
        <title>tRNA translocation by the eukaryotic 80S ribosome and the impact of GTP hydrolysis.</title>
        <authorList>
            <person name="Flis J."/>
            <person name="Holm M."/>
            <person name="Rundlet E.J."/>
            <person name="Loerke J."/>
            <person name="Hilal T."/>
            <person name="Dabrowski M."/>
            <person name="Burger J."/>
            <person name="Mielke T."/>
            <person name="Blanchard S.C."/>
            <person name="Spahn C.M.T."/>
            <person name="Budkevich T.V."/>
        </authorList>
    </citation>
    <scope>STRUCTURE BY ELECTRON MICROSCOPY (3.60 ANGSTROMS) OF 2-150 OF RIBOSOME</scope>
    <scope>FUNCTION</scope>
    <scope>SUBCELLULAR LOCATION</scope>
    <scope>SUBUNIT</scope>
</reference>
<reference evidence="28 29" key="7">
    <citation type="journal article" date="2018" name="Elife">
        <title>Dual tRNA mimicry in the Cricket paralysis virus IRES uncovers an unexpected similarity with the Hepatitis C Virus IRES.</title>
        <authorList>
            <person name="Pisareva V.P."/>
            <person name="Pisarev A.V."/>
            <person name="Fernandez I.S."/>
        </authorList>
    </citation>
    <scope>STRUCTURE BY ELECTRON MICROSCOPY (3.20 ANGSTROMS) OF RIBOSOME</scope>
    <scope>SUBCELLULAR LOCATION</scope>
    <scope>SUBUNIT</scope>
</reference>
<reference evidence="33 34" key="8">
    <citation type="journal article" date="2018" name="Elife">
        <title>Structures of translationally inactive mammalian ribosomes.</title>
        <authorList>
            <person name="Brown A."/>
            <person name="Baird M.R."/>
            <person name="Yip M.C."/>
            <person name="Murray J."/>
            <person name="Shao S."/>
        </authorList>
    </citation>
    <scope>STRUCTURE BY ELECTRON MICROSCOPY (3.30 ANGSTROMS) OF 2-150 OF RIBOSOME</scope>
    <scope>SUBCELLULAR LOCATION</scope>
    <scope>SUBUNIT</scope>
</reference>
<reference evidence="31 32" key="9">
    <citation type="journal article" date="2018" name="Mol. Cell">
        <title>ZNF598 is a quality control sensor of collided ribosomes.</title>
        <authorList>
            <person name="Juszkiewicz S."/>
            <person name="Chandrasekaran V."/>
            <person name="Lin Z."/>
            <person name="Kraatz S."/>
            <person name="Ramakrishnan V."/>
            <person name="Hegde R.S."/>
        </authorList>
    </citation>
    <scope>STRUCTURE BY ELECTRON MICROSCOPY (3.80 ANGSTROMS) OF RIBOSOME</scope>
    <scope>SUBCELLULAR LOCATION</scope>
    <scope>SUBUNIT</scope>
</reference>
<reference evidence="37 38" key="10">
    <citation type="journal article" date="2019" name="Elife">
        <title>Structural and mutational analysis of the ribosome-arresting human XBP1u.</title>
        <authorList>
            <person name="Shanmuganathan V."/>
            <person name="Schiller N."/>
            <person name="Magoulopoulou A."/>
            <person name="Cheng J."/>
            <person name="Braunger K."/>
            <person name="Cymer F."/>
            <person name="Berninghausen O."/>
            <person name="Beatrix B."/>
            <person name="Kohno K."/>
            <person name="von Heijne G."/>
            <person name="Beckmann R."/>
        </authorList>
    </citation>
    <scope>STRUCTURE BY ELECTRON MICROSCOPY (3.00 ANGSTROMS) OF 2-150 OF RIBOSOME</scope>
    <scope>SUBCELLULAR LOCATION</scope>
    <scope>SUBUNIT</scope>
</reference>
<reference evidence="35 36" key="11">
    <citation type="journal article" date="2019" name="EMBO J.">
        <title>The Israeli acute paralysis virus IRES captures host ribosomes by mimicking a ribosomal state with hybrid tRNAs.</title>
        <authorList>
            <person name="Acosta-Reyes F."/>
            <person name="Neupane R."/>
            <person name="Frank J."/>
            <person name="Fernandez I.S."/>
        </authorList>
    </citation>
    <scope>STRUCTURE BY ELECTRON MICROSCOPY (3.10 ANGSTROMS) OF RIBOSOME</scope>
    <scope>SUBCELLULAR LOCATION</scope>
    <scope>SUBUNIT</scope>
</reference>
<reference evidence="39" key="12">
    <citation type="journal article" date="2019" name="Nat. Struct. Mol. Biol.">
        <title>Mechanism of ribosome stalling during translation of a poly(A) tail.</title>
        <authorList>
            <person name="Chandrasekaran V."/>
            <person name="Juszkiewicz S."/>
            <person name="Choi J."/>
            <person name="Puglisi J.D."/>
            <person name="Brown A."/>
            <person name="Shao S."/>
            <person name="Ramakrishnan V."/>
            <person name="Hegde R.S."/>
        </authorList>
    </citation>
    <scope>STRUCTURE BY ELECTRON MICROSCOPY (2.80 ANGSTROMS) OF RIBOSOME</scope>
    <scope>SUBCELLULAR LOCATION</scope>
    <scope>SUBUNIT</scope>
</reference>
<reference evidence="42 43" key="13">
    <citation type="journal article" date="2020" name="Cell Rep.">
        <title>The Halastavi arva virus intergenic region IRES promotes translation by the simplest possible initiation mechanism.</title>
        <authorList>
            <person name="Abaeva I.S."/>
            <person name="Vicens Q."/>
            <person name="Bochler A."/>
            <person name="Soufari H."/>
            <person name="Simonetti A."/>
            <person name="Pestova T.V."/>
            <person name="Hashem Y."/>
            <person name="Hellen C.U.T."/>
        </authorList>
    </citation>
    <scope>STRUCTURE BY ELECTRON MICROSCOPY (3.49 ANGSTROMS) OF 12-151 OF RIBOSOME</scope>
    <scope>SUBCELLULAR LOCATION</scope>
    <scope>SUBUNIT</scope>
</reference>
<reference evidence="40 41" key="14">
    <citation type="journal article" date="2020" name="Elife">
        <title>A complex IRES at the 5'-UTR of a viral mRNA assembles a functional 48S complex via an uAUG intermediate.</title>
        <authorList>
            <person name="Neupane R."/>
            <person name="Pisareva V.P."/>
            <person name="Rodriguez C.F."/>
            <person name="Pisarev A.V."/>
            <person name="Fernandez I.S."/>
        </authorList>
    </citation>
    <scope>STRUCTURE BY ELECTRON MICROSCOPY (3.00 ANGSTROMS) OF RIBOSOME</scope>
    <scope>SUBCELLULAR LOCATION</scope>
    <scope>SUBUNIT</scope>
</reference>
<reference evidence="45 46" key="15">
    <citation type="journal article" date="2022" name="EMBO J.">
        <title>Molecular architecture of 40S translation initiation complexes on the hepatitis C virus IRES.</title>
        <authorList>
            <person name="Brown Z.P."/>
            <person name="Abaeva I.S."/>
            <person name="De S."/>
            <person name="Hellen C.U.T."/>
            <person name="Pestova T.V."/>
            <person name="Frank J."/>
        </authorList>
    </citation>
    <scope>STRUCTURE BY ELECTRON MICROSCOPY (3.50 ANGSTROMS) OF RIBOSOME</scope>
    <scope>SUBCELLULAR LOCATION</scope>
    <scope>SUBUNIT</scope>
</reference>
<reference evidence="47 48" key="16">
    <citation type="journal article" date="2022" name="Mol. Cell">
        <title>Direct epitranscriptomic regulation of mammalian translation initiation through N4-acetylcytidine.</title>
        <authorList>
            <person name="Arango D."/>
            <person name="Sturgill D."/>
            <person name="Yang R."/>
            <person name="Kanai T."/>
            <person name="Bauer P."/>
            <person name="Roy J."/>
            <person name="Wang Z."/>
            <person name="Hosogane M."/>
            <person name="Schiffers S."/>
            <person name="Oberdoerffer S."/>
        </authorList>
    </citation>
    <scope>STRUCTURE BY ELECTRON MICROSCOPY (2.80 ANGSTROMS) OF 12-150 OF RIBOSOME</scope>
    <scope>SUBCELLULAR LOCATION</scope>
    <scope>SUBUNIT</scope>
</reference>
<reference evidence="44" key="17">
    <citation type="journal article" date="2023" name="Nature">
        <title>A molecular network of conserved factors keeps ribosomes dormant in the egg.</title>
        <authorList>
            <person name="Leesch F."/>
            <person name="Lorenzo-Orts L."/>
            <person name="Pribitzer C."/>
            <person name="Grishkovskaya I."/>
            <person name="Roehsner J."/>
            <person name="Chugunova A."/>
            <person name="Matzinger M."/>
            <person name="Roitinger E."/>
            <person name="Belacic K."/>
            <person name="Kandolf S."/>
            <person name="Lin T.Y."/>
            <person name="Mechtler K."/>
            <person name="Meinhart A."/>
            <person name="Haselbach D."/>
            <person name="Pauli A."/>
        </authorList>
    </citation>
    <scope>STRUCTURE BY ELECTRON MICROSCOPY (2.30 ANGSTROMS) OF RIBOSOME</scope>
    <scope>SUBCELLULAR LOCATION</scope>
    <scope>SUBUNIT</scope>
</reference>
<accession>G1SP51</accession>